<comment type="function">
    <text evidence="1">Cell wall formation.</text>
</comment>
<comment type="catalytic activity">
    <reaction evidence="1">
        <text>UDP-N-acetyl-alpha-D-muramate + NADP(+) = UDP-N-acetyl-3-O-(1-carboxyvinyl)-alpha-D-glucosamine + NADPH + H(+)</text>
        <dbReference type="Rhea" id="RHEA:12248"/>
        <dbReference type="ChEBI" id="CHEBI:15378"/>
        <dbReference type="ChEBI" id="CHEBI:57783"/>
        <dbReference type="ChEBI" id="CHEBI:58349"/>
        <dbReference type="ChEBI" id="CHEBI:68483"/>
        <dbReference type="ChEBI" id="CHEBI:70757"/>
        <dbReference type="EC" id="1.3.1.98"/>
    </reaction>
</comment>
<comment type="cofactor">
    <cofactor evidence="1">
        <name>FAD</name>
        <dbReference type="ChEBI" id="CHEBI:57692"/>
    </cofactor>
</comment>
<comment type="pathway">
    <text evidence="1">Cell wall biogenesis; peptidoglycan biosynthesis.</text>
</comment>
<comment type="subcellular location">
    <subcellularLocation>
        <location evidence="1">Cytoplasm</location>
    </subcellularLocation>
</comment>
<comment type="similarity">
    <text evidence="1">Belongs to the MurB family.</text>
</comment>
<organism>
    <name type="scientific">Methylococcus capsulatus (strain ATCC 33009 / NCIMB 11132 / Bath)</name>
    <dbReference type="NCBI Taxonomy" id="243233"/>
    <lineage>
        <taxon>Bacteria</taxon>
        <taxon>Pseudomonadati</taxon>
        <taxon>Pseudomonadota</taxon>
        <taxon>Gammaproteobacteria</taxon>
        <taxon>Methylococcales</taxon>
        <taxon>Methylococcaceae</taxon>
        <taxon>Methylococcus</taxon>
    </lineage>
</organism>
<gene>
    <name evidence="1" type="primary">murB</name>
    <name type="ordered locus">MCA2427</name>
</gene>
<accession>Q604V9</accession>
<name>MURB_METCA</name>
<feature type="chain" id="PRO_0000224694" description="UDP-N-acetylenolpyruvoylglucosamine reductase">
    <location>
        <begin position="1"/>
        <end position="304"/>
    </location>
</feature>
<feature type="domain" description="FAD-binding PCMH-type" evidence="1">
    <location>
        <begin position="31"/>
        <end position="196"/>
    </location>
</feature>
<feature type="active site" evidence="1">
    <location>
        <position position="176"/>
    </location>
</feature>
<feature type="active site" description="Proton donor" evidence="1">
    <location>
        <position position="225"/>
    </location>
</feature>
<feature type="active site" evidence="1">
    <location>
        <position position="295"/>
    </location>
</feature>
<reference key="1">
    <citation type="journal article" date="2004" name="PLoS Biol.">
        <title>Genomic insights into methanotrophy: the complete genome sequence of Methylococcus capsulatus (Bath).</title>
        <authorList>
            <person name="Ward N.L."/>
            <person name="Larsen O."/>
            <person name="Sakwa J."/>
            <person name="Bruseth L."/>
            <person name="Khouri H.M."/>
            <person name="Durkin A.S."/>
            <person name="Dimitrov G."/>
            <person name="Jiang L."/>
            <person name="Scanlan D."/>
            <person name="Kang K.H."/>
            <person name="Lewis M.R."/>
            <person name="Nelson K.E."/>
            <person name="Methe B.A."/>
            <person name="Wu M."/>
            <person name="Heidelberg J.F."/>
            <person name="Paulsen I.T."/>
            <person name="Fouts D.E."/>
            <person name="Ravel J."/>
            <person name="Tettelin H."/>
            <person name="Ren Q."/>
            <person name="Read T.D."/>
            <person name="DeBoy R.T."/>
            <person name="Seshadri R."/>
            <person name="Salzberg S.L."/>
            <person name="Jensen H.B."/>
            <person name="Birkeland N.K."/>
            <person name="Nelson W.C."/>
            <person name="Dodson R.J."/>
            <person name="Grindhaug S.H."/>
            <person name="Holt I.E."/>
            <person name="Eidhammer I."/>
            <person name="Jonasen I."/>
            <person name="Vanaken S."/>
            <person name="Utterback T.R."/>
            <person name="Feldblyum T.V."/>
            <person name="Fraser C.M."/>
            <person name="Lillehaug J.R."/>
            <person name="Eisen J.A."/>
        </authorList>
    </citation>
    <scope>NUCLEOTIDE SEQUENCE [LARGE SCALE GENOMIC DNA]</scope>
    <source>
        <strain>ATCC 33009 / NCIMB 11132 / Bath</strain>
    </source>
</reference>
<protein>
    <recommendedName>
        <fullName evidence="1">UDP-N-acetylenolpyruvoylglucosamine reductase</fullName>
        <ecNumber evidence="1">1.3.1.98</ecNumber>
    </recommendedName>
    <alternativeName>
        <fullName evidence="1">UDP-N-acetylmuramate dehydrogenase</fullName>
    </alternativeName>
</protein>
<sequence length="304" mass="32707">MTVRESAARTAAPSRGTWLEHEPLAGHTSWRVGGPAERFYQPADLDDLVQFLRALSPQEPLFWLGLGSNVLVRDGGIRGTVVCTKNRLRVIEARGPACVYAEAGIPCAHVARFCTERDWVGAEFLAGIPGTLGGALAMNAGAFGGETWSLVRRVLTVNRGGRTIWRAPEEFEVGYRHVQGPEGEWFVAAELELAPGDGRAGRERIKALLARRSATQPTHQPSCGSVFRNPPSDFAARLIEACGLKGHTVGGAQVSLKHANFIVNSGDATAADIETLIAEVRDRVALLCGVWLEPEVRIVGEAQA</sequence>
<evidence type="ECO:0000255" key="1">
    <source>
        <dbReference type="HAMAP-Rule" id="MF_00037"/>
    </source>
</evidence>
<dbReference type="EC" id="1.3.1.98" evidence="1"/>
<dbReference type="EMBL" id="AE017282">
    <property type="protein sequence ID" value="AAU91481.1"/>
    <property type="molecule type" value="Genomic_DNA"/>
</dbReference>
<dbReference type="RefSeq" id="WP_010961652.1">
    <property type="nucleotide sequence ID" value="NC_002977.6"/>
</dbReference>
<dbReference type="SMR" id="Q604V9"/>
<dbReference type="STRING" id="243233.MCA2427"/>
<dbReference type="GeneID" id="88224628"/>
<dbReference type="KEGG" id="mca:MCA2427"/>
<dbReference type="eggNOG" id="COG0812">
    <property type="taxonomic scope" value="Bacteria"/>
</dbReference>
<dbReference type="HOGENOM" id="CLU_035304_1_1_6"/>
<dbReference type="UniPathway" id="UPA00219"/>
<dbReference type="Proteomes" id="UP000006821">
    <property type="component" value="Chromosome"/>
</dbReference>
<dbReference type="GO" id="GO:0005829">
    <property type="term" value="C:cytosol"/>
    <property type="evidence" value="ECO:0007669"/>
    <property type="project" value="TreeGrafter"/>
</dbReference>
<dbReference type="GO" id="GO:0071949">
    <property type="term" value="F:FAD binding"/>
    <property type="evidence" value="ECO:0007669"/>
    <property type="project" value="InterPro"/>
</dbReference>
<dbReference type="GO" id="GO:0008762">
    <property type="term" value="F:UDP-N-acetylmuramate dehydrogenase activity"/>
    <property type="evidence" value="ECO:0007669"/>
    <property type="project" value="UniProtKB-UniRule"/>
</dbReference>
<dbReference type="GO" id="GO:0051301">
    <property type="term" value="P:cell division"/>
    <property type="evidence" value="ECO:0007669"/>
    <property type="project" value="UniProtKB-KW"/>
</dbReference>
<dbReference type="GO" id="GO:0071555">
    <property type="term" value="P:cell wall organization"/>
    <property type="evidence" value="ECO:0007669"/>
    <property type="project" value="UniProtKB-KW"/>
</dbReference>
<dbReference type="GO" id="GO:0009252">
    <property type="term" value="P:peptidoglycan biosynthetic process"/>
    <property type="evidence" value="ECO:0007669"/>
    <property type="project" value="UniProtKB-UniRule"/>
</dbReference>
<dbReference type="GO" id="GO:0008360">
    <property type="term" value="P:regulation of cell shape"/>
    <property type="evidence" value="ECO:0007669"/>
    <property type="project" value="UniProtKB-KW"/>
</dbReference>
<dbReference type="Gene3D" id="3.30.465.10">
    <property type="match status" value="1"/>
</dbReference>
<dbReference type="Gene3D" id="3.90.78.10">
    <property type="entry name" value="UDP-N-acetylenolpyruvoylglucosamine reductase, C-terminal domain"/>
    <property type="match status" value="1"/>
</dbReference>
<dbReference type="Gene3D" id="3.30.43.10">
    <property type="entry name" value="Uridine Diphospho-n-acetylenolpyruvylglucosamine Reductase, domain 2"/>
    <property type="match status" value="1"/>
</dbReference>
<dbReference type="HAMAP" id="MF_00037">
    <property type="entry name" value="MurB"/>
    <property type="match status" value="1"/>
</dbReference>
<dbReference type="InterPro" id="IPR016166">
    <property type="entry name" value="FAD-bd_PCMH"/>
</dbReference>
<dbReference type="InterPro" id="IPR036318">
    <property type="entry name" value="FAD-bd_PCMH-like_sf"/>
</dbReference>
<dbReference type="InterPro" id="IPR016167">
    <property type="entry name" value="FAD-bd_PCMH_sub1"/>
</dbReference>
<dbReference type="InterPro" id="IPR016169">
    <property type="entry name" value="FAD-bd_PCMH_sub2"/>
</dbReference>
<dbReference type="InterPro" id="IPR003170">
    <property type="entry name" value="MurB"/>
</dbReference>
<dbReference type="InterPro" id="IPR011601">
    <property type="entry name" value="MurB_C"/>
</dbReference>
<dbReference type="InterPro" id="IPR036635">
    <property type="entry name" value="MurB_C_sf"/>
</dbReference>
<dbReference type="InterPro" id="IPR006094">
    <property type="entry name" value="Oxid_FAD_bind_N"/>
</dbReference>
<dbReference type="NCBIfam" id="TIGR00179">
    <property type="entry name" value="murB"/>
    <property type="match status" value="1"/>
</dbReference>
<dbReference type="NCBIfam" id="NF010480">
    <property type="entry name" value="PRK13905.1"/>
    <property type="match status" value="1"/>
</dbReference>
<dbReference type="PANTHER" id="PTHR21071">
    <property type="entry name" value="UDP-N-ACETYLENOLPYRUVOYLGLUCOSAMINE REDUCTASE"/>
    <property type="match status" value="1"/>
</dbReference>
<dbReference type="PANTHER" id="PTHR21071:SF4">
    <property type="entry name" value="UDP-N-ACETYLENOLPYRUVOYLGLUCOSAMINE REDUCTASE"/>
    <property type="match status" value="1"/>
</dbReference>
<dbReference type="Pfam" id="PF01565">
    <property type="entry name" value="FAD_binding_4"/>
    <property type="match status" value="1"/>
</dbReference>
<dbReference type="Pfam" id="PF02873">
    <property type="entry name" value="MurB_C"/>
    <property type="match status" value="1"/>
</dbReference>
<dbReference type="SUPFAM" id="SSF56176">
    <property type="entry name" value="FAD-binding/transporter-associated domain-like"/>
    <property type="match status" value="1"/>
</dbReference>
<dbReference type="SUPFAM" id="SSF56194">
    <property type="entry name" value="Uridine diphospho-N-Acetylenolpyruvylglucosamine reductase, MurB, C-terminal domain"/>
    <property type="match status" value="1"/>
</dbReference>
<dbReference type="PROSITE" id="PS51387">
    <property type="entry name" value="FAD_PCMH"/>
    <property type="match status" value="1"/>
</dbReference>
<proteinExistence type="inferred from homology"/>
<keyword id="KW-0131">Cell cycle</keyword>
<keyword id="KW-0132">Cell division</keyword>
<keyword id="KW-0133">Cell shape</keyword>
<keyword id="KW-0961">Cell wall biogenesis/degradation</keyword>
<keyword id="KW-0963">Cytoplasm</keyword>
<keyword id="KW-0274">FAD</keyword>
<keyword id="KW-0285">Flavoprotein</keyword>
<keyword id="KW-0521">NADP</keyword>
<keyword id="KW-0560">Oxidoreductase</keyword>
<keyword id="KW-0573">Peptidoglycan synthesis</keyword>
<keyword id="KW-1185">Reference proteome</keyword>